<gene>
    <name evidence="1" type="primary">rpmB</name>
    <name type="ordered locus">Erum5350</name>
    <name type="ordered locus">ERWE_CDS_05610</name>
</gene>
<sequence>MSRVCDITGQTKSFGNKVSHSNRKTKRTYLVNLHNVTLFSDVLNRKFRFKISSRTLRTIDYKGGLDLYLLETSSRKLSDKAQKIKKMIKKATAENAKVSL</sequence>
<comment type="similarity">
    <text evidence="1">Belongs to the bacterial ribosomal protein bL28 family.</text>
</comment>
<feature type="chain" id="PRO_1000007233" description="Large ribosomal subunit protein bL28">
    <location>
        <begin position="1"/>
        <end position="100"/>
    </location>
</feature>
<evidence type="ECO:0000255" key="1">
    <source>
        <dbReference type="HAMAP-Rule" id="MF_00373"/>
    </source>
</evidence>
<evidence type="ECO:0000305" key="2"/>
<dbReference type="EMBL" id="CR767821">
    <property type="protein sequence ID" value="CAH58264.1"/>
    <property type="molecule type" value="Genomic_DNA"/>
</dbReference>
<dbReference type="EMBL" id="CR925678">
    <property type="protein sequence ID" value="CAI27055.1"/>
    <property type="molecule type" value="Genomic_DNA"/>
</dbReference>
<dbReference type="RefSeq" id="WP_011155215.1">
    <property type="nucleotide sequence ID" value="NC_005295.2"/>
</dbReference>
<dbReference type="SMR" id="Q5HAZ6"/>
<dbReference type="GeneID" id="33058156"/>
<dbReference type="KEGG" id="eru:Erum5350"/>
<dbReference type="KEGG" id="erw:ERWE_CDS_05610"/>
<dbReference type="eggNOG" id="COG0227">
    <property type="taxonomic scope" value="Bacteria"/>
</dbReference>
<dbReference type="HOGENOM" id="CLU_064548_4_2_5"/>
<dbReference type="Proteomes" id="UP000001021">
    <property type="component" value="Chromosome"/>
</dbReference>
<dbReference type="GO" id="GO:1990904">
    <property type="term" value="C:ribonucleoprotein complex"/>
    <property type="evidence" value="ECO:0007669"/>
    <property type="project" value="UniProtKB-KW"/>
</dbReference>
<dbReference type="GO" id="GO:0005840">
    <property type="term" value="C:ribosome"/>
    <property type="evidence" value="ECO:0007669"/>
    <property type="project" value="UniProtKB-KW"/>
</dbReference>
<dbReference type="GO" id="GO:0003735">
    <property type="term" value="F:structural constituent of ribosome"/>
    <property type="evidence" value="ECO:0007669"/>
    <property type="project" value="InterPro"/>
</dbReference>
<dbReference type="GO" id="GO:0006412">
    <property type="term" value="P:translation"/>
    <property type="evidence" value="ECO:0007669"/>
    <property type="project" value="UniProtKB-UniRule"/>
</dbReference>
<dbReference type="Gene3D" id="2.30.170.40">
    <property type="entry name" value="Ribosomal protein L28/L24"/>
    <property type="match status" value="1"/>
</dbReference>
<dbReference type="HAMAP" id="MF_00373">
    <property type="entry name" value="Ribosomal_bL28"/>
    <property type="match status" value="1"/>
</dbReference>
<dbReference type="InterPro" id="IPR026569">
    <property type="entry name" value="Ribosomal_bL28"/>
</dbReference>
<dbReference type="InterPro" id="IPR034704">
    <property type="entry name" value="Ribosomal_bL28/bL31-like_sf"/>
</dbReference>
<dbReference type="InterPro" id="IPR001383">
    <property type="entry name" value="Ribosomal_bL28_bact-type"/>
</dbReference>
<dbReference type="InterPro" id="IPR037147">
    <property type="entry name" value="Ribosomal_bL28_sf"/>
</dbReference>
<dbReference type="NCBIfam" id="TIGR00009">
    <property type="entry name" value="L28"/>
    <property type="match status" value="1"/>
</dbReference>
<dbReference type="PANTHER" id="PTHR13528">
    <property type="entry name" value="39S RIBOSOMAL PROTEIN L28, MITOCHONDRIAL"/>
    <property type="match status" value="1"/>
</dbReference>
<dbReference type="PANTHER" id="PTHR13528:SF2">
    <property type="entry name" value="LARGE RIBOSOMAL SUBUNIT PROTEIN BL28M"/>
    <property type="match status" value="1"/>
</dbReference>
<dbReference type="Pfam" id="PF00830">
    <property type="entry name" value="Ribosomal_L28"/>
    <property type="match status" value="1"/>
</dbReference>
<dbReference type="SUPFAM" id="SSF143800">
    <property type="entry name" value="L28p-like"/>
    <property type="match status" value="1"/>
</dbReference>
<organism>
    <name type="scientific">Ehrlichia ruminantium (strain Welgevonden)</name>
    <dbReference type="NCBI Taxonomy" id="254945"/>
    <lineage>
        <taxon>Bacteria</taxon>
        <taxon>Pseudomonadati</taxon>
        <taxon>Pseudomonadota</taxon>
        <taxon>Alphaproteobacteria</taxon>
        <taxon>Rickettsiales</taxon>
        <taxon>Anaplasmataceae</taxon>
        <taxon>Ehrlichia</taxon>
    </lineage>
</organism>
<name>RL28_EHRRW</name>
<accession>Q5HAZ6</accession>
<accession>Q5FEP9</accession>
<keyword id="KW-0687">Ribonucleoprotein</keyword>
<keyword id="KW-0689">Ribosomal protein</keyword>
<proteinExistence type="inferred from homology"/>
<protein>
    <recommendedName>
        <fullName evidence="1">Large ribosomal subunit protein bL28</fullName>
    </recommendedName>
    <alternativeName>
        <fullName evidence="2">50S ribosomal protein L28</fullName>
    </alternativeName>
</protein>
<reference key="1">
    <citation type="journal article" date="2005" name="Proc. Natl. Acad. Sci. U.S.A.">
        <title>The genome of the heartwater agent Ehrlichia ruminantium contains multiple tandem repeats of actively variable copy number.</title>
        <authorList>
            <person name="Collins N.E."/>
            <person name="Liebenberg J."/>
            <person name="de Villiers E.P."/>
            <person name="Brayton K.A."/>
            <person name="Louw E."/>
            <person name="Pretorius A."/>
            <person name="Faber F.E."/>
            <person name="van Heerden H."/>
            <person name="Josemans A."/>
            <person name="van Kleef M."/>
            <person name="Steyn H.C."/>
            <person name="van Strijp M.F."/>
            <person name="Zweygarth E."/>
            <person name="Jongejan F."/>
            <person name="Maillard J.C."/>
            <person name="Berthier D."/>
            <person name="Botha M."/>
            <person name="Joubert F."/>
            <person name="Corton C.H."/>
            <person name="Thomson N.R."/>
            <person name="Allsopp M.T."/>
            <person name="Allsopp B.A."/>
        </authorList>
    </citation>
    <scope>NUCLEOTIDE SEQUENCE [LARGE SCALE GENOMIC DNA]</scope>
    <source>
        <strain>Welgevonden</strain>
    </source>
</reference>
<reference key="2">
    <citation type="journal article" date="2006" name="J. Bacteriol.">
        <title>Comparative genomic analysis of three strains of Ehrlichia ruminantium reveals an active process of genome size plasticity.</title>
        <authorList>
            <person name="Frutos R."/>
            <person name="Viari A."/>
            <person name="Ferraz C."/>
            <person name="Morgat A."/>
            <person name="Eychenie S."/>
            <person name="Kandassamy Y."/>
            <person name="Chantal I."/>
            <person name="Bensaid A."/>
            <person name="Coissac E."/>
            <person name="Vachiery N."/>
            <person name="Demaille J."/>
            <person name="Martinez D."/>
        </authorList>
    </citation>
    <scope>NUCLEOTIDE SEQUENCE [LARGE SCALE GENOMIC DNA]</scope>
    <source>
        <strain>Welgevonden</strain>
    </source>
</reference>